<keyword id="KW-0963">Cytoplasm</keyword>
<keyword id="KW-0648">Protein biosynthesis</keyword>
<sequence>MIEETLLEAEEKMEKAVLVTKEDFASIRTGRPSPATFSRITVEYYGAMTPVNQLASFQVPEPRMVIISPYDKAAMPAIEKAIRESDLGVNPSNDGNIIRVVFPELSEERRKEYVKVARNKAEDGRTSVRNVRRQAKDAIDKAVKAGEIGEDEGHRAQKELDALTQKYVGEIDELLKHKESELLEV</sequence>
<name>RRF_THEFY</name>
<reference key="1">
    <citation type="journal article" date="2007" name="J. Bacteriol.">
        <title>Genome sequence and analysis of the soil cellulolytic actinomycete Thermobifida fusca YX.</title>
        <authorList>
            <person name="Lykidis A."/>
            <person name="Mavromatis K."/>
            <person name="Ivanova N."/>
            <person name="Anderson I."/>
            <person name="Land M."/>
            <person name="DiBartolo G."/>
            <person name="Martinez M."/>
            <person name="Lapidus A."/>
            <person name="Lucas S."/>
            <person name="Copeland A."/>
            <person name="Richardson P."/>
            <person name="Wilson D.B."/>
            <person name="Kyrpides N."/>
        </authorList>
    </citation>
    <scope>NUCLEOTIDE SEQUENCE [LARGE SCALE GENOMIC DNA]</scope>
    <source>
        <strain>YX</strain>
    </source>
</reference>
<feature type="chain" id="PRO_1000003302" description="Ribosome-recycling factor">
    <location>
        <begin position="1"/>
        <end position="185"/>
    </location>
</feature>
<organism>
    <name type="scientific">Thermobifida fusca (strain YX)</name>
    <dbReference type="NCBI Taxonomy" id="269800"/>
    <lineage>
        <taxon>Bacteria</taxon>
        <taxon>Bacillati</taxon>
        <taxon>Actinomycetota</taxon>
        <taxon>Actinomycetes</taxon>
        <taxon>Streptosporangiales</taxon>
        <taxon>Nocardiopsidaceae</taxon>
        <taxon>Thermobifida</taxon>
    </lineage>
</organism>
<protein>
    <recommendedName>
        <fullName evidence="1">Ribosome-recycling factor</fullName>
        <shortName evidence="1">RRF</shortName>
    </recommendedName>
    <alternativeName>
        <fullName evidence="1">Ribosome-releasing factor</fullName>
    </alternativeName>
</protein>
<gene>
    <name evidence="1" type="primary">frr</name>
    <name type="ordered locus">Tfu_0679</name>
</gene>
<dbReference type="EMBL" id="CP000088">
    <property type="protein sequence ID" value="AAZ54717.1"/>
    <property type="molecule type" value="Genomic_DNA"/>
</dbReference>
<dbReference type="RefSeq" id="WP_011291126.1">
    <property type="nucleotide sequence ID" value="NC_007333.1"/>
</dbReference>
<dbReference type="SMR" id="Q47S50"/>
<dbReference type="STRING" id="269800.Tfu_0679"/>
<dbReference type="KEGG" id="tfu:Tfu_0679"/>
<dbReference type="eggNOG" id="COG0233">
    <property type="taxonomic scope" value="Bacteria"/>
</dbReference>
<dbReference type="HOGENOM" id="CLU_073981_2_0_11"/>
<dbReference type="OrthoDB" id="9804006at2"/>
<dbReference type="GO" id="GO:0005737">
    <property type="term" value="C:cytoplasm"/>
    <property type="evidence" value="ECO:0007669"/>
    <property type="project" value="UniProtKB-SubCell"/>
</dbReference>
<dbReference type="GO" id="GO:0043023">
    <property type="term" value="F:ribosomal large subunit binding"/>
    <property type="evidence" value="ECO:0007669"/>
    <property type="project" value="TreeGrafter"/>
</dbReference>
<dbReference type="GO" id="GO:0006415">
    <property type="term" value="P:translational termination"/>
    <property type="evidence" value="ECO:0007669"/>
    <property type="project" value="UniProtKB-UniRule"/>
</dbReference>
<dbReference type="CDD" id="cd00520">
    <property type="entry name" value="RRF"/>
    <property type="match status" value="1"/>
</dbReference>
<dbReference type="FunFam" id="1.10.132.20:FF:000001">
    <property type="entry name" value="Ribosome-recycling factor"/>
    <property type="match status" value="1"/>
</dbReference>
<dbReference type="FunFam" id="3.30.1360.40:FF:000001">
    <property type="entry name" value="Ribosome-recycling factor"/>
    <property type="match status" value="1"/>
</dbReference>
<dbReference type="Gene3D" id="3.30.1360.40">
    <property type="match status" value="1"/>
</dbReference>
<dbReference type="Gene3D" id="1.10.132.20">
    <property type="entry name" value="Ribosome-recycling factor"/>
    <property type="match status" value="1"/>
</dbReference>
<dbReference type="HAMAP" id="MF_00040">
    <property type="entry name" value="RRF"/>
    <property type="match status" value="1"/>
</dbReference>
<dbReference type="InterPro" id="IPR002661">
    <property type="entry name" value="Ribosome_recyc_fac"/>
</dbReference>
<dbReference type="InterPro" id="IPR023584">
    <property type="entry name" value="Ribosome_recyc_fac_dom"/>
</dbReference>
<dbReference type="InterPro" id="IPR036191">
    <property type="entry name" value="RRF_sf"/>
</dbReference>
<dbReference type="NCBIfam" id="TIGR00496">
    <property type="entry name" value="frr"/>
    <property type="match status" value="1"/>
</dbReference>
<dbReference type="PANTHER" id="PTHR20982:SF3">
    <property type="entry name" value="MITOCHONDRIAL RIBOSOME RECYCLING FACTOR PSEUDO 1"/>
    <property type="match status" value="1"/>
</dbReference>
<dbReference type="PANTHER" id="PTHR20982">
    <property type="entry name" value="RIBOSOME RECYCLING FACTOR"/>
    <property type="match status" value="1"/>
</dbReference>
<dbReference type="Pfam" id="PF01765">
    <property type="entry name" value="RRF"/>
    <property type="match status" value="1"/>
</dbReference>
<dbReference type="SUPFAM" id="SSF55194">
    <property type="entry name" value="Ribosome recycling factor, RRF"/>
    <property type="match status" value="1"/>
</dbReference>
<comment type="function">
    <text evidence="1">Responsible for the release of ribosomes from messenger RNA at the termination of protein biosynthesis. May increase the efficiency of translation by recycling ribosomes from one round of translation to another.</text>
</comment>
<comment type="subcellular location">
    <subcellularLocation>
        <location evidence="1">Cytoplasm</location>
    </subcellularLocation>
</comment>
<comment type="similarity">
    <text evidence="1">Belongs to the RRF family.</text>
</comment>
<evidence type="ECO:0000255" key="1">
    <source>
        <dbReference type="HAMAP-Rule" id="MF_00040"/>
    </source>
</evidence>
<accession>Q47S50</accession>
<proteinExistence type="inferred from homology"/>